<name>GL8D1_XENLA</name>
<comment type="subcellular location">
    <subcellularLocation>
        <location evidence="2">Membrane</location>
        <topology evidence="2">Single-pass type II membrane protein</topology>
    </subcellularLocation>
</comment>
<comment type="similarity">
    <text evidence="2">Belongs to the glycosyltransferase 8 family.</text>
</comment>
<keyword id="KW-0325">Glycoprotein</keyword>
<keyword id="KW-0328">Glycosyltransferase</keyword>
<keyword id="KW-0472">Membrane</keyword>
<keyword id="KW-1185">Reference proteome</keyword>
<keyword id="KW-0735">Signal-anchor</keyword>
<keyword id="KW-0808">Transferase</keyword>
<keyword id="KW-0812">Transmembrane</keyword>
<keyword id="KW-1133">Transmembrane helix</keyword>
<dbReference type="EC" id="2.4.1.-"/>
<dbReference type="EMBL" id="BC075153">
    <property type="protein sequence ID" value="AAH75153.1"/>
    <property type="molecule type" value="mRNA"/>
</dbReference>
<dbReference type="RefSeq" id="NP_001086355.1">
    <property type="nucleotide sequence ID" value="NM_001092886.1"/>
</dbReference>
<dbReference type="SMR" id="Q6DJM3"/>
<dbReference type="CAZy" id="GT8">
    <property type="family name" value="Glycosyltransferase Family 8"/>
</dbReference>
<dbReference type="GlyCosmos" id="Q6DJM3">
    <property type="glycosylation" value="3 sites, No reported glycans"/>
</dbReference>
<dbReference type="DNASU" id="444784"/>
<dbReference type="GeneID" id="444784"/>
<dbReference type="KEGG" id="xla:444784"/>
<dbReference type="AGR" id="Xenbase:XB-GENE-6254360"/>
<dbReference type="CTD" id="444784"/>
<dbReference type="Xenbase" id="XB-GENE-6254360">
    <property type="gene designation" value="glt8d1.L"/>
</dbReference>
<dbReference type="OrthoDB" id="411524at2759"/>
<dbReference type="Proteomes" id="UP000186698">
    <property type="component" value="Chromosome 4L"/>
</dbReference>
<dbReference type="Bgee" id="444784">
    <property type="expression patterns" value="Expressed in oocyte and 19 other cell types or tissues"/>
</dbReference>
<dbReference type="GO" id="GO:0005794">
    <property type="term" value="C:Golgi apparatus"/>
    <property type="evidence" value="ECO:0000318"/>
    <property type="project" value="GO_Central"/>
</dbReference>
<dbReference type="GO" id="GO:0016020">
    <property type="term" value="C:membrane"/>
    <property type="evidence" value="ECO:0007669"/>
    <property type="project" value="UniProtKB-SubCell"/>
</dbReference>
<dbReference type="GO" id="GO:0008194">
    <property type="term" value="F:UDP-glycosyltransferase activity"/>
    <property type="evidence" value="ECO:0007669"/>
    <property type="project" value="UniProtKB-ARBA"/>
</dbReference>
<dbReference type="CDD" id="cd06429">
    <property type="entry name" value="GT8_like_1"/>
    <property type="match status" value="1"/>
</dbReference>
<dbReference type="Gene3D" id="3.90.550.10">
    <property type="entry name" value="Spore Coat Polysaccharide Biosynthesis Protein SpsA, Chain A"/>
    <property type="match status" value="1"/>
</dbReference>
<dbReference type="InterPro" id="IPR002495">
    <property type="entry name" value="Glyco_trans_8"/>
</dbReference>
<dbReference type="InterPro" id="IPR050748">
    <property type="entry name" value="Glycosyltrans_8_dom-fam"/>
</dbReference>
<dbReference type="InterPro" id="IPR029044">
    <property type="entry name" value="Nucleotide-diphossugar_trans"/>
</dbReference>
<dbReference type="PANTHER" id="PTHR13778">
    <property type="entry name" value="GLYCOSYLTRANSFERASE 8 DOMAIN-CONTAINING PROTEIN"/>
    <property type="match status" value="1"/>
</dbReference>
<dbReference type="PANTHER" id="PTHR13778:SF3">
    <property type="entry name" value="GLYCOSYLTRANSFERASE 8 DOMAIN-CONTAINING PROTEIN 1"/>
    <property type="match status" value="1"/>
</dbReference>
<dbReference type="Pfam" id="PF01501">
    <property type="entry name" value="Glyco_transf_8"/>
    <property type="match status" value="1"/>
</dbReference>
<dbReference type="SUPFAM" id="SSF53448">
    <property type="entry name" value="Nucleotide-diphospho-sugar transferases"/>
    <property type="match status" value="1"/>
</dbReference>
<protein>
    <recommendedName>
        <fullName>Glycosyltransferase 8 domain-containing protein 1</fullName>
        <ecNumber>2.4.1.-</ecNumber>
    </recommendedName>
</protein>
<accession>Q6DJM3</accession>
<gene>
    <name type="primary">glt8d1</name>
</gene>
<feature type="chain" id="PRO_0000288532" description="Glycosyltransferase 8 domain-containing protein 1">
    <location>
        <begin position="1"/>
        <end position="364"/>
    </location>
</feature>
<feature type="topological domain" description="Cytoplasmic" evidence="1">
    <location>
        <begin position="1"/>
        <end position="5"/>
    </location>
</feature>
<feature type="transmembrane region" description="Helical; Signal-anchor for type II membrane protein" evidence="1">
    <location>
        <begin position="6"/>
        <end position="26"/>
    </location>
</feature>
<feature type="topological domain" description="Lumenal" evidence="1">
    <location>
        <begin position="27"/>
        <end position="364"/>
    </location>
</feature>
<feature type="glycosylation site" description="N-linked (GlcNAc...) asparagine" evidence="1">
    <location>
        <position position="102"/>
    </location>
</feature>
<feature type="glycosylation site" description="N-linked (GlcNAc...) asparagine" evidence="1">
    <location>
        <position position="247"/>
    </location>
</feature>
<feature type="glycosylation site" description="N-linked (GlcNAc...) asparagine" evidence="1">
    <location>
        <position position="255"/>
    </location>
</feature>
<evidence type="ECO:0000255" key="1"/>
<evidence type="ECO:0000305" key="2"/>
<sequence length="364" mass="41063">MRRVHITVILLAAVIFLLVLHHNILGLSDILKRQNSDTGPLVFQRLESLPDAPDIGPEHGHGEEIAVVIPGVEERLGGLIATINSISSNTKSNVVFYIITTNDTKKHISSWLDGTDLKRVAYKLLTFDARVLDGKVRVDAGAEPVKPMTFARFYLPSLLPGAKKVIYLDDDVIVQDDIVQLYNTPISPGHAAAFSEDCDSVTSKFPVRGGANQYNYIGFLDYKKERIRSLGIKANTCSFNPGVFVANLTEWRRQNITRQLEKWMELDVTEELYSKSLSGNIAAPPLLIVFYRLYSNINPLWHVRHLGSSTGKRYSPQFVKAAKLLHWNGHFKPWGRTSSFPEIWEKWFLPDPSGQFSLIRRHAE</sequence>
<proteinExistence type="evidence at transcript level"/>
<reference key="1">
    <citation type="submission" date="2004-06" db="EMBL/GenBank/DDBJ databases">
        <authorList>
            <consortium name="NIH - Xenopus Gene Collection (XGC) project"/>
        </authorList>
    </citation>
    <scope>NUCLEOTIDE SEQUENCE [LARGE SCALE MRNA]</scope>
    <source>
        <tissue>Kidney</tissue>
    </source>
</reference>
<organism>
    <name type="scientific">Xenopus laevis</name>
    <name type="common">African clawed frog</name>
    <dbReference type="NCBI Taxonomy" id="8355"/>
    <lineage>
        <taxon>Eukaryota</taxon>
        <taxon>Metazoa</taxon>
        <taxon>Chordata</taxon>
        <taxon>Craniata</taxon>
        <taxon>Vertebrata</taxon>
        <taxon>Euteleostomi</taxon>
        <taxon>Amphibia</taxon>
        <taxon>Batrachia</taxon>
        <taxon>Anura</taxon>
        <taxon>Pipoidea</taxon>
        <taxon>Pipidae</taxon>
        <taxon>Xenopodinae</taxon>
        <taxon>Xenopus</taxon>
        <taxon>Xenopus</taxon>
    </lineage>
</organism>